<feature type="signal peptide" evidence="1">
    <location>
        <begin position="1"/>
        <end position="25"/>
    </location>
</feature>
<feature type="propeptide" id="PRO_0000023251" evidence="1">
    <location>
        <begin position="26"/>
        <end position="31"/>
    </location>
</feature>
<feature type="chain" id="PRO_0000023252" description="Parathyroid hormone">
    <location>
        <begin position="32"/>
        <end position="115"/>
    </location>
</feature>
<feature type="region of interest" description="Important for receptor binding" evidence="1">
    <location>
        <begin position="51"/>
        <end position="69"/>
    </location>
</feature>
<feature type="region of interest" description="Disordered" evidence="2">
    <location>
        <begin position="72"/>
        <end position="96"/>
    </location>
</feature>
<feature type="compositionally biased region" description="Basic and acidic residues" evidence="2">
    <location>
        <begin position="84"/>
        <end position="96"/>
    </location>
</feature>
<comment type="function">
    <text evidence="1">Parathyroid hormone elevates calcium level by dissolving the salts in bone and preventing their renal excretion. Acts by binding to its receptor, PTH1R, activating G protein-coupled receptor signaling. Stimulates [1-14C]-2-deoxy-D-glucose (2DG) transport and glycogen synthesis in osteoblastic cells.</text>
</comment>
<comment type="subunit">
    <text evidence="1">Interacts with PTH1R (via N-terminal extracellular domain).</text>
</comment>
<comment type="subcellular location">
    <subcellularLocation>
        <location evidence="1">Secreted</location>
    </subcellularLocation>
</comment>
<comment type="similarity">
    <text evidence="4">Belongs to the parathyroid hormone family.</text>
</comment>
<protein>
    <recommendedName>
        <fullName evidence="3">Parathyroid hormone</fullName>
        <shortName>PTH</shortName>
    </recommendedName>
    <alternativeName>
        <fullName>Parathyrin</fullName>
    </alternativeName>
</protein>
<organism>
    <name type="scientific">Macaca fascicularis</name>
    <name type="common">Crab-eating macaque</name>
    <name type="synonym">Cynomolgus monkey</name>
    <dbReference type="NCBI Taxonomy" id="9541"/>
    <lineage>
        <taxon>Eukaryota</taxon>
        <taxon>Metazoa</taxon>
        <taxon>Chordata</taxon>
        <taxon>Craniata</taxon>
        <taxon>Vertebrata</taxon>
        <taxon>Euteleostomi</taxon>
        <taxon>Mammalia</taxon>
        <taxon>Eutheria</taxon>
        <taxon>Euarchontoglires</taxon>
        <taxon>Primates</taxon>
        <taxon>Haplorrhini</taxon>
        <taxon>Catarrhini</taxon>
        <taxon>Cercopithecidae</taxon>
        <taxon>Cercopithecinae</taxon>
        <taxon>Macaca</taxon>
    </lineage>
</organism>
<evidence type="ECO:0000250" key="1">
    <source>
        <dbReference type="UniProtKB" id="P01270"/>
    </source>
</evidence>
<evidence type="ECO:0000256" key="2">
    <source>
        <dbReference type="SAM" id="MobiDB-lite"/>
    </source>
</evidence>
<evidence type="ECO:0000303" key="3">
    <source ref="1"/>
</evidence>
<evidence type="ECO:0000305" key="4"/>
<sequence>MIPAKDMAKVMIVMLAICFLTKSDGKSVKKRSVSEIQLMHNLGKHLNSMERVEWLRKKLQDVHNFIALGAPLAPRDAGSQRPRKKEDNILVESHEKSLGEADKADVDVLTKAKSQ</sequence>
<keyword id="KW-0165">Cleavage on pair of basic residues</keyword>
<keyword id="KW-0372">Hormone</keyword>
<keyword id="KW-1185">Reference proteome</keyword>
<keyword id="KW-0964">Secreted</keyword>
<keyword id="KW-0732">Signal</keyword>
<accession>Q9XT35</accession>
<dbReference type="EMBL" id="AF130257">
    <property type="protein sequence ID" value="AAD42777.1"/>
    <property type="molecule type" value="Genomic_DNA"/>
</dbReference>
<dbReference type="RefSeq" id="XP_005578619.1">
    <property type="nucleotide sequence ID" value="XM_005578562.4"/>
</dbReference>
<dbReference type="BMRB" id="Q9XT35"/>
<dbReference type="STRING" id="9541.ENSMFAP00000019698"/>
<dbReference type="GeneID" id="102145320"/>
<dbReference type="KEGG" id="mcf:102145320"/>
<dbReference type="CTD" id="5741"/>
<dbReference type="VEuPathDB" id="HostDB:ENSMFAG00000032854"/>
<dbReference type="eggNOG" id="ENOG502SB2W">
    <property type="taxonomic scope" value="Eukaryota"/>
</dbReference>
<dbReference type="OMA" id="MKLQDVH"/>
<dbReference type="OrthoDB" id="3553at314294"/>
<dbReference type="Proteomes" id="UP000233100">
    <property type="component" value="Chromosome 14"/>
</dbReference>
<dbReference type="GO" id="GO:0005615">
    <property type="term" value="C:extracellular space"/>
    <property type="evidence" value="ECO:0007669"/>
    <property type="project" value="TreeGrafter"/>
</dbReference>
<dbReference type="GO" id="GO:0005179">
    <property type="term" value="F:hormone activity"/>
    <property type="evidence" value="ECO:0007669"/>
    <property type="project" value="UniProtKB-KW"/>
</dbReference>
<dbReference type="GO" id="GO:0031856">
    <property type="term" value="F:parathyroid hormone receptor binding"/>
    <property type="evidence" value="ECO:0007669"/>
    <property type="project" value="TreeGrafter"/>
</dbReference>
<dbReference type="GO" id="GO:0051428">
    <property type="term" value="F:peptide hormone receptor binding"/>
    <property type="evidence" value="ECO:0000250"/>
    <property type="project" value="UniProtKB"/>
</dbReference>
<dbReference type="GO" id="GO:0007267">
    <property type="term" value="P:cell-cell signaling"/>
    <property type="evidence" value="ECO:0007669"/>
    <property type="project" value="TreeGrafter"/>
</dbReference>
<dbReference type="GO" id="GO:0006874">
    <property type="term" value="P:intracellular calcium ion homeostasis"/>
    <property type="evidence" value="ECO:0007669"/>
    <property type="project" value="InterPro"/>
</dbReference>
<dbReference type="GO" id="GO:0046326">
    <property type="term" value="P:positive regulation of D-glucose import"/>
    <property type="evidence" value="ECO:0000250"/>
    <property type="project" value="UniProtKB"/>
</dbReference>
<dbReference type="GO" id="GO:0045725">
    <property type="term" value="P:positive regulation of glycogen biosynthetic process"/>
    <property type="evidence" value="ECO:0000250"/>
    <property type="project" value="UniProtKB"/>
</dbReference>
<dbReference type="InterPro" id="IPR003625">
    <property type="entry name" value="PTH"/>
</dbReference>
<dbReference type="InterPro" id="IPR001415">
    <property type="entry name" value="PTH/PTH-rel"/>
</dbReference>
<dbReference type="PANTHER" id="PTHR10541">
    <property type="entry name" value="PARATHYROID HORMONE"/>
    <property type="match status" value="1"/>
</dbReference>
<dbReference type="PANTHER" id="PTHR10541:SF2">
    <property type="entry name" value="PARATHYROID HORMONE"/>
    <property type="match status" value="1"/>
</dbReference>
<dbReference type="Pfam" id="PF01279">
    <property type="entry name" value="Parathyroid"/>
    <property type="match status" value="1"/>
</dbReference>
<dbReference type="PIRSF" id="PIRSF001832">
    <property type="entry name" value="PTH"/>
    <property type="match status" value="1"/>
</dbReference>
<dbReference type="SMART" id="SM00087">
    <property type="entry name" value="PTH"/>
    <property type="match status" value="1"/>
</dbReference>
<dbReference type="PROSITE" id="PS00335">
    <property type="entry name" value="PARATHYROID"/>
    <property type="match status" value="1"/>
</dbReference>
<gene>
    <name type="primary">PTH</name>
</gene>
<name>PTHY_MACFA</name>
<proteinExistence type="inferred from homology"/>
<reference key="1">
    <citation type="journal article" date="1998" name="J. Sci. Res. Chulalongkorn Univ.">
        <title>Nucleotide sequences of parathyroid gene in five species of macaque of Thailand.</title>
        <authorList>
            <person name="Malaivijitnond S."/>
            <person name="Takenaka O."/>
        </authorList>
    </citation>
    <scope>NUCLEOTIDE SEQUENCE [GENOMIC DNA]</scope>
</reference>